<evidence type="ECO:0000250" key="1"/>
<evidence type="ECO:0000250" key="2">
    <source>
        <dbReference type="UniProtKB" id="P01106"/>
    </source>
</evidence>
<evidence type="ECO:0000250" key="3">
    <source>
        <dbReference type="UniProtKB" id="P01108"/>
    </source>
</evidence>
<evidence type="ECO:0000255" key="4">
    <source>
        <dbReference type="PROSITE-ProRule" id="PRU00981"/>
    </source>
</evidence>
<evidence type="ECO:0000256" key="5">
    <source>
        <dbReference type="SAM" id="MobiDB-lite"/>
    </source>
</evidence>
<evidence type="ECO:0000303" key="6">
    <source>
    </source>
</evidence>
<evidence type="ECO:0000305" key="7"/>
<evidence type="ECO:0000305" key="8">
    <source>
    </source>
</evidence>
<organism>
    <name type="scientific">Pan troglodytes</name>
    <name type="common">Chimpanzee</name>
    <dbReference type="NCBI Taxonomy" id="9598"/>
    <lineage>
        <taxon>Eukaryota</taxon>
        <taxon>Metazoa</taxon>
        <taxon>Chordata</taxon>
        <taxon>Craniata</taxon>
        <taxon>Vertebrata</taxon>
        <taxon>Euteleostomi</taxon>
        <taxon>Mammalia</taxon>
        <taxon>Eutheria</taxon>
        <taxon>Euarchontoglires</taxon>
        <taxon>Primates</taxon>
        <taxon>Haplorrhini</taxon>
        <taxon>Catarrhini</taxon>
        <taxon>Hominidae</taxon>
        <taxon>Pan</taxon>
    </lineage>
</organism>
<feature type="chain" id="PRO_0000127297" description="Myc proto-oncogene protein">
    <location>
        <begin position="1"/>
        <end position="454"/>
    </location>
</feature>
<feature type="domain" description="bHLH" evidence="4">
    <location>
        <begin position="369"/>
        <end position="421"/>
    </location>
</feature>
<feature type="region of interest" description="Disordered" evidence="5">
    <location>
        <begin position="216"/>
        <end position="310"/>
    </location>
</feature>
<feature type="region of interest" description="Disordered" evidence="5">
    <location>
        <begin position="349"/>
        <end position="375"/>
    </location>
</feature>
<feature type="region of interest" description="Leucine-zipper">
    <location>
        <begin position="428"/>
        <end position="449"/>
    </location>
</feature>
<feature type="short sequence motif" description="9aaTAD" evidence="2">
    <location>
        <begin position="115"/>
        <end position="123"/>
    </location>
</feature>
<feature type="short sequence motif" description="UBR5-degron" evidence="2">
    <location>
        <begin position="370"/>
        <end position="379"/>
    </location>
</feature>
<feature type="compositionally biased region" description="Low complexity" evidence="5">
    <location>
        <begin position="216"/>
        <end position="252"/>
    </location>
</feature>
<feature type="compositionally biased region" description="Acidic residues" evidence="5">
    <location>
        <begin position="266"/>
        <end position="278"/>
    </location>
</feature>
<feature type="compositionally biased region" description="Basic and acidic residues" evidence="5">
    <location>
        <begin position="281"/>
        <end position="293"/>
    </location>
</feature>
<feature type="compositionally biased region" description="Polar residues" evidence="5">
    <location>
        <begin position="350"/>
        <end position="362"/>
    </location>
</feature>
<feature type="modified residue" description="Phosphoserine" evidence="2">
    <location>
        <position position="21"/>
    </location>
</feature>
<feature type="modified residue" description="Phosphothreonine" evidence="2">
    <location>
        <position position="23"/>
    </location>
</feature>
<feature type="modified residue" description="Phosphothreonine; by GSK3; alternate" evidence="2">
    <location>
        <position position="73"/>
    </location>
</feature>
<feature type="modified residue" description="Phosphoserine; by DYRK2, GSK3 and CDK2" evidence="2">
    <location>
        <position position="77"/>
    </location>
</feature>
<feature type="modified residue" description="Phosphoserine" evidence="2">
    <location>
        <position position="86"/>
    </location>
</feature>
<feature type="modified residue" description="Phosphoserine" evidence="2">
    <location>
        <position position="96"/>
    </location>
</feature>
<feature type="modified residue" description="N6-acetyllysine; by PCAF; alternate" evidence="2">
    <location>
        <position position="158"/>
    </location>
</feature>
<feature type="modified residue" description="N6-acetyllysine; alternate" evidence="2">
    <location>
        <position position="163"/>
    </location>
</feature>
<feature type="modified residue" description="Phosphoserine" evidence="2">
    <location>
        <position position="166"/>
    </location>
</feature>
<feature type="modified residue" description="N6-acetyllysine; by PCAF" evidence="2">
    <location>
        <position position="172"/>
    </location>
</feature>
<feature type="modified residue" description="Phosphoserine" evidence="2">
    <location>
        <position position="174"/>
    </location>
</feature>
<feature type="modified residue" description="Phosphoserine" evidence="2">
    <location>
        <position position="176"/>
    </location>
</feature>
<feature type="modified residue" description="N6-acetyllysine; by PCAF" evidence="2">
    <location>
        <position position="290"/>
    </location>
</feature>
<feature type="modified residue" description="Phosphoserine" evidence="2">
    <location>
        <position position="308"/>
    </location>
</feature>
<feature type="modified residue" description="Phosphoserine" evidence="2">
    <location>
        <position position="329"/>
    </location>
</feature>
<feature type="modified residue" description="Phosphothreonine" evidence="2">
    <location>
        <position position="330"/>
    </location>
</feature>
<feature type="modified residue" description="N6-acetyllysine; by PCAF" evidence="2">
    <location>
        <position position="332"/>
    </location>
</feature>
<feature type="modified residue" description="N6-acetyllysine; by PCAF" evidence="2">
    <location>
        <position position="338"/>
    </location>
</feature>
<feature type="modified residue" description="Phosphoserine; by PIM2; in vitro" evidence="3">
    <location>
        <position position="344"/>
    </location>
</feature>
<feature type="modified residue" description="Phosphoserine" evidence="2">
    <location>
        <position position="359"/>
    </location>
</feature>
<feature type="modified residue" description="Phosphoserine" evidence="2">
    <location>
        <position position="362"/>
    </location>
</feature>
<feature type="modified residue" description="Phosphoserine" evidence="2">
    <location>
        <position position="363"/>
    </location>
</feature>
<feature type="modified residue" description="N6-acetyllysine; by PCAF" evidence="2">
    <location>
        <position position="386"/>
    </location>
</feature>
<feature type="glycosylation site" description="O-linked (GlcNAc) threonine; alternate" evidence="1">
    <location>
        <position position="73"/>
    </location>
</feature>
<feature type="cross-link" description="Glycyl lysine isopeptide (Lys-Gly) (interchain with G-Cter in SUMO2)" evidence="2">
    <location>
        <position position="67"/>
    </location>
</feature>
<feature type="cross-link" description="Glycyl lysine isopeptide (Lys-Gly) (interchain with G-Cter in SUMO2); alternate" evidence="2">
    <location>
        <position position="158"/>
    </location>
</feature>
<feature type="cross-link" description="Glycyl lysine isopeptide (Lys-Gly) (interchain with G-Cter in SUMO2); alternate" evidence="2">
    <location>
        <position position="163"/>
    </location>
</feature>
<feature type="cross-link" description="Glycyl lysine isopeptide (Lys-Gly) (interchain with G-Cter in SUMO2)" evidence="2">
    <location>
        <position position="313"/>
    </location>
</feature>
<feature type="splice variant" id="VSP_061783" description="In isoform 1.">
    <location>
        <begin position="1"/>
        <end position="15"/>
    </location>
</feature>
<feature type="sequence conflict" description="In Ref. 2; ABM91963." evidence="7" ref="2">
    <original>S</original>
    <variation>G</variation>
    <location>
        <position position="217"/>
    </location>
</feature>
<feature type="sequence conflict" description="In Ref. 2; ABM91963." evidence="7" ref="2">
    <original>A</original>
    <variation>V</variation>
    <location>
        <position position="454"/>
    </location>
</feature>
<reference key="1">
    <citation type="journal article" date="1991" name="Gene">
        <title>Cloning and nucleotide sequence of the chimpanzee c-myc gene.</title>
        <authorList>
            <person name="Argaut C."/>
            <person name="Rigolet M."/>
            <person name="Eladari M.E."/>
            <person name="Galibert F."/>
        </authorList>
    </citation>
    <scope>NUCLEOTIDE SEQUENCE [GENOMIC DNA]</scope>
</reference>
<reference key="2">
    <citation type="submission" date="2006-08" db="EMBL/GenBank/DDBJ databases">
        <title>Positive selection in transcription factor genes on the human lineage.</title>
        <authorList>
            <person name="Nickel G.C."/>
            <person name="Tefft D.L."/>
            <person name="Trevarthen K."/>
            <person name="Funt J."/>
            <person name="Adams M.D."/>
        </authorList>
    </citation>
    <scope>NUCLEOTIDE SEQUENCE [GENOMIC DNA]</scope>
</reference>
<reference key="3">
    <citation type="journal article" date="2002" name="Nucleic Acids Res.">
        <title>The effects of sequence length and oligonucleotide mismatches on 5' exonuclease assay efficiency.</title>
        <authorList>
            <person name="Smith S.J."/>
            <person name="Vigilant L."/>
            <person name="Morin P.A."/>
        </authorList>
    </citation>
    <scope>NUCLEOTIDE SEQUENCE [GENOMIC DNA] OF 291-448</scope>
</reference>
<reference key="4">
    <citation type="journal article" date="1988" name="Cell">
        <title>A non-AUG translational initiation in c-myc exon 1 generates an N-terminally distinct protein whose synthesis is disrupted in Burkitt's lymphomas.</title>
        <authorList>
            <person name="Hann S.R."/>
            <person name="King M.W."/>
            <person name="Bentley D.L."/>
            <person name="Anderson C.W."/>
            <person name="Eisenman R.N."/>
        </authorList>
    </citation>
    <scope>ALTERNATIVE TRANSLATION INITIATION</scope>
</reference>
<comment type="function">
    <text evidence="2 3">Transcription factor that binds DNA in a non-specific manner, yet also specifically recognizes the core sequence 5'-CAC[GA]TG-3'. Activates the transcription of growth-related genes. Binds to the VEGFA promoter, promoting VEGFA production and subsequent sprouting angiogenesis. Regulator of somatic reprogramming, controls self-renewal of embryonic stem cells. Functions with TAF6L to activate target gene expression through RNA polymerase II pause release (By similarity). Positively regulates transcription of HNRNPA1, HNRNPA2 and PTBP1 which in turn regulate splicing of pyruvate kinase PKM by binding repressively to sequences flanking PKM exon 9, inhibiting exon 9 inclusion and resulting in exon 10 inclusion and production of the PKM M2 isoform (By similarity).</text>
</comment>
<comment type="subunit">
    <text evidence="2 3">Efficient DNA binding requires dimerization with another bHLH protein. Binds DNA as a heterodimer with MAX (By similarity). Interacts with TAF1C and SPAG9. Interacts with PARP10. Interacts with KDM5A and KDM5B. Interacts (when phosphorylated at Thr-73 and Ser-77) with FBXW7. Interacts with PIM2. Interacts with RIOX1. The heterodimer MYC:MAX interacts with ABI1; the interaction may enhance MYC:MAX transcriptional activity. Interacts with TRIM6 (By similarity). Interacts with NPM1; the binary complex is recruited to the promoter of MYC target genes and enhances their transcription (By similarity). Interacts with CIP2A; leading to the stabilization of MYC (By similarity). Interacts with NUP205 (By similarity). Interacts with HEATR1; the interaction is required for localization of MYC to the nucleolus (By similarity).</text>
</comment>
<comment type="subcellular location">
    <subcellularLocation>
        <location evidence="2">Nucleus</location>
        <location evidence="2">Nucleoplasm</location>
    </subcellularLocation>
    <subcellularLocation>
        <location evidence="2">Nucleus</location>
        <location evidence="2">Nucleolus</location>
    </subcellularLocation>
    <subcellularLocation>
        <location evidence="2">Nucleus</location>
    </subcellularLocation>
    <subcellularLocation>
        <location evidence="2">Cytoplasm</location>
    </subcellularLocation>
    <subcellularLocation>
        <location evidence="2">Chromosome</location>
    </subcellularLocation>
    <text evidence="2">Association with chromatin is reduced by hyperphosphorylation. Localization to the nucleolus is dependent on HEATR1.</text>
</comment>
<comment type="alternative products">
    <event type="alternative initiation"/>
    <isoform>
        <id>P23583-1</id>
        <name>2</name>
        <name evidence="6">c-myc 1</name>
        <sequence type="displayed"/>
    </isoform>
    <isoform>
        <id>P23583-2</id>
        <name>1</name>
        <name evidence="6">c-myc 2</name>
        <sequence type="described" ref="VSP_061783"/>
    </isoform>
</comment>
<comment type="domain">
    <text evidence="2">The 9aaTAD motif is a transactivation domain present in a large number of yeast and animal transcription factors.</text>
</comment>
<comment type="PTM">
    <text evidence="2 3">Phosphorylated by PRKDC (By similarity). Phosphorylation at Ser-344 by PIM2 leads to the stabilization of MYC (By similarity). Phosphorylation at Ser-77 by CDK2 prevents Ras-induced senescence. Phosphorylated at Ser-77 by DYRK2; this primes the protein for subsequent phosphorylation by GSK3B at Thr-73. Phosphorylation at Thr-73 and Ser-77 by GSK3 is required for ubiquitination and degradation by the proteasome. Dephosphorylation at multiple sites by the PNUTS-PP1 complex promotes MYC stability by preventing ubiquitination by the SCF(FBXW7) complex. Dephosphorylation at Ser-77 by protein phosphatase 2A (PPP2CA) promotes its degradation; interaction with PPP2CA is enhanced by AMBRA1 (By similarity).</text>
</comment>
<comment type="PTM">
    <text evidence="2 3">Ubiquitinated by the SCF(FBXW7) complex when phosphorylated at Thr-73 and Ser-77, leading to its degradation by the proteasome. Ubiquitination is counteracted by USP28 in the nucleoplasm and USP36 in the nucleolus, both interacting with of FBXW7, leading to its deubiquitination and preventing degradation. Also polyubiquitinated by the DCX(TRPC4AP) complex. Ubiquitinated by UBR5 when not forming a heterodimer with another bHLH protein, leading to its degradation: UBR5 recognizes and binds a degron that is only available upon heterodimer dissociation (By similarity). Ubiquitinated by TRIM6 in a phosphorylation-independent manner.</text>
</comment>
<comment type="miscellaneous">
    <text evidence="8">Alternative translation initiation from an upstream, in-frame non-ATG (CTG) codon or a downstream ATG start site results in the production of 2 isoforms with distinct N-termini, shown in this entry as isoform 2 and isoform 1, respectively.</text>
</comment>
<comment type="miscellaneous">
    <molecule>Isoform 2</molecule>
    <text evidence="8">Produced by alternative translation initiation from a CTG codon, which is translated as Met.</text>
</comment>
<keyword id="KW-0007">Acetylation</keyword>
<keyword id="KW-0010">Activator</keyword>
<keyword id="KW-0024">Alternative initiation</keyword>
<keyword id="KW-0158">Chromosome</keyword>
<keyword id="KW-0963">Cytoplasm</keyword>
<keyword id="KW-0238">DNA-binding</keyword>
<keyword id="KW-0325">Glycoprotein</keyword>
<keyword id="KW-1017">Isopeptide bond</keyword>
<keyword id="KW-0539">Nucleus</keyword>
<keyword id="KW-0597">Phosphoprotein</keyword>
<keyword id="KW-0656">Proto-oncogene</keyword>
<keyword id="KW-1185">Reference proteome</keyword>
<keyword id="KW-0804">Transcription</keyword>
<keyword id="KW-0805">Transcription regulation</keyword>
<keyword id="KW-0832">Ubl conjugation</keyword>
<gene>
    <name type="primary">MYC</name>
</gene>
<protein>
    <recommendedName>
        <fullName>Myc proto-oncogene protein</fullName>
    </recommendedName>
    <alternativeName>
        <fullName>Proto-oncogene c-Myc</fullName>
    </alternativeName>
    <alternativeName>
        <fullName>Transcription factor p64</fullName>
    </alternativeName>
</protein>
<sequence>MDFFRIVENQQPPATMPLNVSFTNRNYDLDYDSVQPYFYCDEEENFYQQQQQSELQPPAPSEDIWKKFELLPTPPLSPSRRSGLCSPSYVAVTPFSLRGDNDGGGGSFSTADQLEMVTELLGGDMVNQSFICDPDDETFIKNIIIQDCMWSGFSAAAKLVSEKLASYQAARKDSGSPNPARGHSVCSTSSLYLQDLSAAASECIDPSVVFPYPLNDSSSPKSCPSQDSSAFSPSSDSLLSSTESSPQGSPEPLVLHEETPPTTSSDSEEEQEDEEEIDVVSVEKRQAPGKRSESGSPSAGGHSKPPHSPLVLKRCHVSTHQHNYAAPPSTRKDYPAAKRVKLDSVRVLRQISNNRKCTSPRSSDTEENDKRRTHNVLERQRRNELKRSFFALRDQIPELENNEKAPKVVILKKATAYILSVQAEEQKLISEEDLLRKRREQLKHKLEQLRNSCA</sequence>
<accession>P23583</accession>
<accession>A2T708</accession>
<accession>Q8MJ74</accession>
<dbReference type="EMBL" id="M38057">
    <property type="protein sequence ID" value="AAA72907.1"/>
    <property type="molecule type" value="Genomic_DNA"/>
</dbReference>
<dbReference type="EMBL" id="DQ977348">
    <property type="protein sequence ID" value="ABM91963.1"/>
    <property type="molecule type" value="Genomic_DNA"/>
</dbReference>
<dbReference type="EMBL" id="AF519445">
    <property type="protein sequence ID" value="AAN03870.1"/>
    <property type="molecule type" value="Genomic_DNA"/>
</dbReference>
<dbReference type="PIR" id="JU0449">
    <property type="entry name" value="JU0449"/>
</dbReference>
<dbReference type="RefSeq" id="NP_001136266.1">
    <property type="nucleotide sequence ID" value="NM_001142794.1"/>
</dbReference>
<dbReference type="BMRB" id="P23583"/>
<dbReference type="FunCoup" id="P23583">
    <property type="interactions" value="3883"/>
</dbReference>
<dbReference type="STRING" id="9598.ENSPTRP00000075568"/>
<dbReference type="GlyCosmos" id="P23583">
    <property type="glycosylation" value="1 site, No reported glycans"/>
</dbReference>
<dbReference type="PaxDb" id="9598-ENSPTRP00000035190"/>
<dbReference type="GeneID" id="464393"/>
<dbReference type="KEGG" id="ptr:464393"/>
<dbReference type="CTD" id="4609"/>
<dbReference type="eggNOG" id="KOG2483">
    <property type="taxonomic scope" value="Eukaryota"/>
</dbReference>
<dbReference type="InParanoid" id="P23583"/>
<dbReference type="OrthoDB" id="14602at9604"/>
<dbReference type="Proteomes" id="UP000002277">
    <property type="component" value="Unplaced"/>
</dbReference>
<dbReference type="GO" id="GO:0005737">
    <property type="term" value="C:cytoplasm"/>
    <property type="evidence" value="ECO:0007669"/>
    <property type="project" value="UniProtKB-SubCell"/>
</dbReference>
<dbReference type="GO" id="GO:0005730">
    <property type="term" value="C:nucleolus"/>
    <property type="evidence" value="ECO:0000250"/>
    <property type="project" value="UniProtKB"/>
</dbReference>
<dbReference type="GO" id="GO:0005654">
    <property type="term" value="C:nucleoplasm"/>
    <property type="evidence" value="ECO:0000250"/>
    <property type="project" value="UniProtKB"/>
</dbReference>
<dbReference type="GO" id="GO:0005634">
    <property type="term" value="C:nucleus"/>
    <property type="evidence" value="ECO:0000250"/>
    <property type="project" value="UniProtKB"/>
</dbReference>
<dbReference type="GO" id="GO:0003677">
    <property type="term" value="F:DNA binding"/>
    <property type="evidence" value="ECO:0000250"/>
    <property type="project" value="UniProtKB"/>
</dbReference>
<dbReference type="GO" id="GO:0000981">
    <property type="term" value="F:DNA-binding transcription factor activity, RNA polymerase II-specific"/>
    <property type="evidence" value="ECO:0000250"/>
    <property type="project" value="UniProtKB"/>
</dbReference>
<dbReference type="GO" id="GO:0070888">
    <property type="term" value="F:E-box binding"/>
    <property type="evidence" value="ECO:0000250"/>
    <property type="project" value="UniProtKB"/>
</dbReference>
<dbReference type="GO" id="GO:0046983">
    <property type="term" value="F:protein dimerization activity"/>
    <property type="evidence" value="ECO:0007669"/>
    <property type="project" value="InterPro"/>
</dbReference>
<dbReference type="GO" id="GO:0044877">
    <property type="term" value="F:protein-containing complex binding"/>
    <property type="evidence" value="ECO:0000250"/>
    <property type="project" value="UniProtKB"/>
</dbReference>
<dbReference type="GO" id="GO:0000978">
    <property type="term" value="F:RNA polymerase II cis-regulatory region sequence-specific DNA binding"/>
    <property type="evidence" value="ECO:0000318"/>
    <property type="project" value="GO_Central"/>
</dbReference>
<dbReference type="GO" id="GO:0006338">
    <property type="term" value="P:chromatin remodeling"/>
    <property type="evidence" value="ECO:0000250"/>
    <property type="project" value="UniProtKB"/>
</dbReference>
<dbReference type="GO" id="GO:0051276">
    <property type="term" value="P:chromosome organization"/>
    <property type="evidence" value="ECO:0000250"/>
    <property type="project" value="UniProtKB"/>
</dbReference>
<dbReference type="GO" id="GO:0006974">
    <property type="term" value="P:DNA damage response"/>
    <property type="evidence" value="ECO:0000250"/>
    <property type="project" value="UniProtKB"/>
</dbReference>
<dbReference type="GO" id="GO:0000082">
    <property type="term" value="P:G1/S transition of mitotic cell cycle"/>
    <property type="evidence" value="ECO:0000250"/>
    <property type="project" value="UniProtKB"/>
</dbReference>
<dbReference type="GO" id="GO:0006879">
    <property type="term" value="P:intracellular iron ion homeostasis"/>
    <property type="evidence" value="ECO:0000250"/>
    <property type="project" value="UniProtKB"/>
</dbReference>
<dbReference type="GO" id="GO:0000165">
    <property type="term" value="P:MAPK cascade"/>
    <property type="evidence" value="ECO:0000250"/>
    <property type="project" value="UniProtKB"/>
</dbReference>
<dbReference type="GO" id="GO:0043066">
    <property type="term" value="P:negative regulation of apoptotic process"/>
    <property type="evidence" value="ECO:0000250"/>
    <property type="project" value="UniProtKB"/>
</dbReference>
<dbReference type="GO" id="GO:0051782">
    <property type="term" value="P:negative regulation of cell division"/>
    <property type="evidence" value="ECO:0000250"/>
    <property type="project" value="UniProtKB"/>
</dbReference>
<dbReference type="GO" id="GO:0045656">
    <property type="term" value="P:negative regulation of monocyte differentiation"/>
    <property type="evidence" value="ECO:0000250"/>
    <property type="project" value="UniProtKB"/>
</dbReference>
<dbReference type="GO" id="GO:0032873">
    <property type="term" value="P:negative regulation of stress-activated MAPK cascade"/>
    <property type="evidence" value="ECO:0000250"/>
    <property type="project" value="UniProtKB"/>
</dbReference>
<dbReference type="GO" id="GO:0008284">
    <property type="term" value="P:positive regulation of cell population proliferation"/>
    <property type="evidence" value="ECO:0000318"/>
    <property type="project" value="GO_Central"/>
</dbReference>
<dbReference type="GO" id="GO:0045893">
    <property type="term" value="P:positive regulation of DNA-templated transcription"/>
    <property type="evidence" value="ECO:0000250"/>
    <property type="project" value="UniProtKB"/>
</dbReference>
<dbReference type="GO" id="GO:0050679">
    <property type="term" value="P:positive regulation of epithelial cell proliferation"/>
    <property type="evidence" value="ECO:0000250"/>
    <property type="project" value="UniProtKB"/>
</dbReference>
<dbReference type="GO" id="GO:0048146">
    <property type="term" value="P:positive regulation of fibroblast proliferation"/>
    <property type="evidence" value="ECO:0000250"/>
    <property type="project" value="UniProtKB"/>
</dbReference>
<dbReference type="GO" id="GO:0045944">
    <property type="term" value="P:positive regulation of transcription by RNA polymerase II"/>
    <property type="evidence" value="ECO:0000250"/>
    <property type="project" value="UniProtKB"/>
</dbReference>
<dbReference type="GO" id="GO:0006355">
    <property type="term" value="P:regulation of DNA-templated transcription"/>
    <property type="evidence" value="ECO:0000250"/>
    <property type="project" value="UniProtKB"/>
</dbReference>
<dbReference type="GO" id="GO:1904672">
    <property type="term" value="P:regulation of somatic stem cell population maintenance"/>
    <property type="evidence" value="ECO:0000250"/>
    <property type="project" value="UniProtKB"/>
</dbReference>
<dbReference type="GO" id="GO:0032204">
    <property type="term" value="P:regulation of telomere maintenance"/>
    <property type="evidence" value="ECO:0000250"/>
    <property type="project" value="UniProtKB"/>
</dbReference>
<dbReference type="GO" id="GO:0006357">
    <property type="term" value="P:regulation of transcription by RNA polymerase II"/>
    <property type="evidence" value="ECO:0000318"/>
    <property type="project" value="GO_Central"/>
</dbReference>
<dbReference type="GO" id="GO:0009410">
    <property type="term" value="P:response to xenobiotic stimulus"/>
    <property type="evidence" value="ECO:0000250"/>
    <property type="project" value="UniProtKB"/>
</dbReference>
<dbReference type="GO" id="GO:0016072">
    <property type="term" value="P:rRNA metabolic process"/>
    <property type="evidence" value="ECO:0000250"/>
    <property type="project" value="UniProtKB"/>
</dbReference>
<dbReference type="CDD" id="cd11458">
    <property type="entry name" value="bHLHzip_c-Myc"/>
    <property type="match status" value="1"/>
</dbReference>
<dbReference type="FunFam" id="4.10.280.10:FF:000019">
    <property type="entry name" value="Myc proto-oncogene protein"/>
    <property type="match status" value="1"/>
</dbReference>
<dbReference type="Gene3D" id="4.10.280.10">
    <property type="entry name" value="Helix-loop-helix DNA-binding domain"/>
    <property type="match status" value="1"/>
</dbReference>
<dbReference type="InterPro" id="IPR011598">
    <property type="entry name" value="bHLH_dom"/>
</dbReference>
<dbReference type="InterPro" id="IPR036638">
    <property type="entry name" value="HLH_DNA-bd_sf"/>
</dbReference>
<dbReference type="InterPro" id="IPR003327">
    <property type="entry name" value="Myc-LZ"/>
</dbReference>
<dbReference type="InterPro" id="IPR050433">
    <property type="entry name" value="Myc_transcription_factors"/>
</dbReference>
<dbReference type="InterPro" id="IPR002418">
    <property type="entry name" value="Tscrpt_reg_Myc"/>
</dbReference>
<dbReference type="InterPro" id="IPR012682">
    <property type="entry name" value="Tscrpt_reg_Myc_N"/>
</dbReference>
<dbReference type="PANTHER" id="PTHR45851">
    <property type="entry name" value="MYC PROTO-ONCOGENE"/>
    <property type="match status" value="1"/>
</dbReference>
<dbReference type="Pfam" id="PF00010">
    <property type="entry name" value="HLH"/>
    <property type="match status" value="1"/>
</dbReference>
<dbReference type="Pfam" id="PF02344">
    <property type="entry name" value="Myc-LZ"/>
    <property type="match status" value="1"/>
</dbReference>
<dbReference type="Pfam" id="PF01056">
    <property type="entry name" value="Myc_N"/>
    <property type="match status" value="1"/>
</dbReference>
<dbReference type="PIRSF" id="PIRSF001705">
    <property type="entry name" value="Myc_protein"/>
    <property type="match status" value="1"/>
</dbReference>
<dbReference type="PRINTS" id="PR00044">
    <property type="entry name" value="LEUZIPPRMYC"/>
</dbReference>
<dbReference type="SMART" id="SM00353">
    <property type="entry name" value="HLH"/>
    <property type="match status" value="1"/>
</dbReference>
<dbReference type="SUPFAM" id="SSF47459">
    <property type="entry name" value="HLH, helix-loop-helix DNA-binding domain"/>
    <property type="match status" value="1"/>
</dbReference>
<dbReference type="PROSITE" id="PS50888">
    <property type="entry name" value="BHLH"/>
    <property type="match status" value="1"/>
</dbReference>
<name>MYC_PANTR</name>
<proteinExistence type="inferred from homology"/>